<keyword id="KW-0479">Metal-binding</keyword>
<keyword id="KW-1185">Reference proteome</keyword>
<keyword id="KW-0687">Ribonucleoprotein</keyword>
<keyword id="KW-0689">Ribosomal protein</keyword>
<keyword id="KW-0694">RNA-binding</keyword>
<keyword id="KW-0699">rRNA-binding</keyword>
<keyword id="KW-0862">Zinc</keyword>
<keyword id="KW-0863">Zinc-finger</keyword>
<organism>
    <name type="scientific">Sulfurisphaera tokodaii (strain DSM 16993 / JCM 10545 / NBRC 100140 / 7)</name>
    <name type="common">Sulfolobus tokodaii</name>
    <dbReference type="NCBI Taxonomy" id="273063"/>
    <lineage>
        <taxon>Archaea</taxon>
        <taxon>Thermoproteota</taxon>
        <taxon>Thermoprotei</taxon>
        <taxon>Sulfolobales</taxon>
        <taxon>Sulfolobaceae</taxon>
        <taxon>Sulfurisphaera</taxon>
    </lineage>
</organism>
<proteinExistence type="inferred from homology"/>
<gene>
    <name evidence="1" type="primary">rpl24e</name>
    <name type="ordered locus">STK_02804</name>
    <name type="ORF">STS039</name>
</gene>
<evidence type="ECO:0000255" key="1">
    <source>
        <dbReference type="HAMAP-Rule" id="MF_00773"/>
    </source>
</evidence>
<evidence type="ECO:0000305" key="2"/>
<sequence length="61" mass="6993">MPSIKQCSFCGKEIPPATGLMYIRNDGSILWFCSNKCKKSMLKLHRDPKKLKWTKSYIGGK</sequence>
<accession>Q975Z9</accession>
<name>RL24E_SULTO</name>
<dbReference type="EMBL" id="BA000023">
    <property type="protein sequence ID" value="BAB65249.1"/>
    <property type="molecule type" value="Genomic_DNA"/>
</dbReference>
<dbReference type="RefSeq" id="WP_010978232.1">
    <property type="nucleotide sequence ID" value="NC_003106.2"/>
</dbReference>
<dbReference type="SMR" id="Q975Z9"/>
<dbReference type="STRING" id="273063.STK_02804"/>
<dbReference type="KEGG" id="sto:STK_02804"/>
<dbReference type="PATRIC" id="fig|273063.9.peg.333"/>
<dbReference type="eggNOG" id="arCOG01950">
    <property type="taxonomic scope" value="Archaea"/>
</dbReference>
<dbReference type="OrthoDB" id="55506at2157"/>
<dbReference type="Proteomes" id="UP000001015">
    <property type="component" value="Chromosome"/>
</dbReference>
<dbReference type="GO" id="GO:1990904">
    <property type="term" value="C:ribonucleoprotein complex"/>
    <property type="evidence" value="ECO:0007669"/>
    <property type="project" value="UniProtKB-KW"/>
</dbReference>
<dbReference type="GO" id="GO:0005840">
    <property type="term" value="C:ribosome"/>
    <property type="evidence" value="ECO:0007669"/>
    <property type="project" value="UniProtKB-KW"/>
</dbReference>
<dbReference type="GO" id="GO:0019843">
    <property type="term" value="F:rRNA binding"/>
    <property type="evidence" value="ECO:0007669"/>
    <property type="project" value="UniProtKB-UniRule"/>
</dbReference>
<dbReference type="GO" id="GO:0003735">
    <property type="term" value="F:structural constituent of ribosome"/>
    <property type="evidence" value="ECO:0007669"/>
    <property type="project" value="InterPro"/>
</dbReference>
<dbReference type="GO" id="GO:0008270">
    <property type="term" value="F:zinc ion binding"/>
    <property type="evidence" value="ECO:0007669"/>
    <property type="project" value="UniProtKB-UniRule"/>
</dbReference>
<dbReference type="GO" id="GO:0006412">
    <property type="term" value="P:translation"/>
    <property type="evidence" value="ECO:0007669"/>
    <property type="project" value="UniProtKB-UniRule"/>
</dbReference>
<dbReference type="CDD" id="cd00472">
    <property type="entry name" value="Ribosomal_L24e_L24"/>
    <property type="match status" value="1"/>
</dbReference>
<dbReference type="FunFam" id="2.30.170.20:FF:000001">
    <property type="entry name" value="probable ribosome biogenesis protein RLP24"/>
    <property type="match status" value="1"/>
</dbReference>
<dbReference type="Gene3D" id="2.30.170.20">
    <property type="entry name" value="Ribosomal protein L24e"/>
    <property type="match status" value="1"/>
</dbReference>
<dbReference type="HAMAP" id="MF_00773">
    <property type="entry name" value="Ribosomal_eL24"/>
    <property type="match status" value="1"/>
</dbReference>
<dbReference type="InterPro" id="IPR038630">
    <property type="entry name" value="L24e/L24_sf"/>
</dbReference>
<dbReference type="InterPro" id="IPR056366">
    <property type="entry name" value="Ribosomal_eL24"/>
</dbReference>
<dbReference type="InterPro" id="IPR055345">
    <property type="entry name" value="Ribosomal_eL24-rel_arc"/>
</dbReference>
<dbReference type="InterPro" id="IPR000988">
    <property type="entry name" value="Ribosomal_eL24-rel_N"/>
</dbReference>
<dbReference type="InterPro" id="IPR023442">
    <property type="entry name" value="Ribosomal_eL24_CS"/>
</dbReference>
<dbReference type="InterPro" id="IPR011017">
    <property type="entry name" value="TRASH_dom"/>
</dbReference>
<dbReference type="NCBIfam" id="NF034186">
    <property type="entry name" value="PRK14891.1-1"/>
    <property type="match status" value="1"/>
</dbReference>
<dbReference type="PANTHER" id="PTHR10792">
    <property type="entry name" value="60S RIBOSOMAL PROTEIN L24"/>
    <property type="match status" value="1"/>
</dbReference>
<dbReference type="PANTHER" id="PTHR10792:SF1">
    <property type="entry name" value="RIBOSOMAL PROTEIN L24"/>
    <property type="match status" value="1"/>
</dbReference>
<dbReference type="Pfam" id="PF01246">
    <property type="entry name" value="Ribosomal_L24e"/>
    <property type="match status" value="1"/>
</dbReference>
<dbReference type="SMART" id="SM00746">
    <property type="entry name" value="TRASH"/>
    <property type="match status" value="1"/>
</dbReference>
<dbReference type="SUPFAM" id="SSF57716">
    <property type="entry name" value="Glucocorticoid receptor-like (DNA-binding domain)"/>
    <property type="match status" value="1"/>
</dbReference>
<dbReference type="PROSITE" id="PS01073">
    <property type="entry name" value="RIBOSOMAL_L24E"/>
    <property type="match status" value="1"/>
</dbReference>
<protein>
    <recommendedName>
        <fullName evidence="1">Large ribosomal subunit protein eL24</fullName>
    </recommendedName>
    <alternativeName>
        <fullName evidence="2">50S ribosomal protein L24e</fullName>
    </alternativeName>
</protein>
<comment type="function">
    <text evidence="1">Binds to the 23S rRNA.</text>
</comment>
<comment type="cofactor">
    <cofactor evidence="1">
        <name>Zn(2+)</name>
        <dbReference type="ChEBI" id="CHEBI:29105"/>
    </cofactor>
    <text evidence="1">Binds 1 zinc ion per subunit.</text>
</comment>
<comment type="subunit">
    <text evidence="1">Part of the 50S ribosomal subunit. Forms a cluster with proteins L3 and L14.</text>
</comment>
<comment type="similarity">
    <text evidence="1">Belongs to the eukaryotic ribosomal protein eL24 family.</text>
</comment>
<reference key="1">
    <citation type="journal article" date="2001" name="DNA Res.">
        <title>Complete genome sequence of an aerobic thermoacidophilic Crenarchaeon, Sulfolobus tokodaii strain7.</title>
        <authorList>
            <person name="Kawarabayasi Y."/>
            <person name="Hino Y."/>
            <person name="Horikawa H."/>
            <person name="Jin-no K."/>
            <person name="Takahashi M."/>
            <person name="Sekine M."/>
            <person name="Baba S."/>
            <person name="Ankai A."/>
            <person name="Kosugi H."/>
            <person name="Hosoyama A."/>
            <person name="Fukui S."/>
            <person name="Nagai Y."/>
            <person name="Nishijima K."/>
            <person name="Otsuka R."/>
            <person name="Nakazawa H."/>
            <person name="Takamiya M."/>
            <person name="Kato Y."/>
            <person name="Yoshizawa T."/>
            <person name="Tanaka T."/>
            <person name="Kudoh Y."/>
            <person name="Yamazaki J."/>
            <person name="Kushida N."/>
            <person name="Oguchi A."/>
            <person name="Aoki K."/>
            <person name="Masuda S."/>
            <person name="Yanagii M."/>
            <person name="Nishimura M."/>
            <person name="Yamagishi A."/>
            <person name="Oshima T."/>
            <person name="Kikuchi H."/>
        </authorList>
    </citation>
    <scope>NUCLEOTIDE SEQUENCE [LARGE SCALE GENOMIC DNA]</scope>
    <source>
        <strain>DSM 16993 / JCM 10545 / NBRC 100140 / 7</strain>
    </source>
</reference>
<feature type="chain" id="PRO_0000136929" description="Large ribosomal subunit protein eL24">
    <location>
        <begin position="1"/>
        <end position="61"/>
    </location>
</feature>
<feature type="zinc finger region" description="C4-type" evidence="1">
    <location>
        <begin position="7"/>
        <end position="37"/>
    </location>
</feature>
<feature type="binding site" evidence="1">
    <location>
        <position position="7"/>
    </location>
    <ligand>
        <name>Zn(2+)</name>
        <dbReference type="ChEBI" id="CHEBI:29105"/>
    </ligand>
</feature>
<feature type="binding site" evidence="1">
    <location>
        <position position="10"/>
    </location>
    <ligand>
        <name>Zn(2+)</name>
        <dbReference type="ChEBI" id="CHEBI:29105"/>
    </ligand>
</feature>
<feature type="binding site" evidence="1">
    <location>
        <position position="33"/>
    </location>
    <ligand>
        <name>Zn(2+)</name>
        <dbReference type="ChEBI" id="CHEBI:29105"/>
    </ligand>
</feature>
<feature type="binding site" evidence="1">
    <location>
        <position position="37"/>
    </location>
    <ligand>
        <name>Zn(2+)</name>
        <dbReference type="ChEBI" id="CHEBI:29105"/>
    </ligand>
</feature>